<comment type="function">
    <text evidence="1 6 8">Promotes double-strand break (DSB) end-joining and facilitates programmed recombination by controlling how DNA ends are joined in a spatially oriented manner during repair (By similarity). Also plays a role in DNA repair by restricting DNA end resection in double strand break (DSB) repair (PubMed:24507776, PubMed:37014751). Facilitates replication of complex DNA regions and regulates the maintenance of chromatin structure (PubMed:37014751).</text>
</comment>
<comment type="subunit">
    <text evidence="1 5 7 8">Interacts with NEK6 (PubMed:20873783). Interacts (via an atypical PIP-box) with PCNA; this interaction facilitates cenrtomeric localization of ERCC6L2 (PubMed:37014751). Interacts with CYREN; this interaction is DNA independent (PubMed:32355287). Interacts with XRCC6 and XRCC5 (By similarity).</text>
</comment>
<comment type="interaction">
    <interactant intactId="EBI-3951765">
        <id>Q5T890</id>
    </interactant>
    <interactant intactId="EBI-8787584">
        <id>Q9BWK5</id>
        <label>CYREN</label>
    </interactant>
    <organismsDiffer>false</organismsDiffer>
    <experiments>3</experiments>
</comment>
<comment type="interaction">
    <interactant intactId="EBI-3951765">
        <id>Q5T890</id>
    </interactant>
    <interactant intactId="EBI-2555179">
        <id>Q9NUJ3</id>
        <label>TCP11L1</label>
    </interactant>
    <organismsDiffer>false</organismsDiffer>
    <experiments>3</experiments>
</comment>
<comment type="subcellular location">
    <subcellularLocation>
        <location evidence="6 7">Nucleus</location>
    </subcellularLocation>
    <subcellularLocation>
        <location evidence="5">Cytoplasm</location>
        <location evidence="5">Cytoskeleton</location>
        <location evidence="5">Microtubule organizing center</location>
        <location evidence="5">Centrosome</location>
    </subcellularLocation>
    <subcellularLocation>
        <location evidence="6">Mitochondrion</location>
    </subcellularLocation>
    <subcellularLocation>
        <location evidence="8">Chromosome</location>
        <location evidence="8">Centromere</location>
    </subcellularLocation>
    <text evidence="5 6 8">Colocalizes with NEK6 in the centrosome (PubMed:20873783). In response to DNA damage, translocates from the cytosol to mitochondria and nucleus in a reactive oxygen species (ROS)-dependent manner (PubMed:24507776). Centromeric localization is facilitated by its interaction with PCNA (PubMed:37014751).</text>
</comment>
<comment type="alternative products">
    <event type="alternative splicing"/>
    <isoform>
        <id>Q5T890-1</id>
        <name>1</name>
        <sequence type="displayed"/>
    </isoform>
    <isoform>
        <id>Q5T890-2</id>
        <name>2</name>
        <name>RAD26L</name>
        <sequence type="described" ref="VSP_054668 VSP_054669"/>
    </isoform>
</comment>
<comment type="tissue specificity">
    <text evidence="6">Expressed in bone marrow (at protein level).</text>
</comment>
<comment type="domain">
    <text evidence="8">The atypical PIP-box motif mediates interaction with PCNA.</text>
</comment>
<comment type="domain">
    <text evidence="7">The helicase C-terminal domaine drives nuclear localization and recruitment to damaged sites.</text>
</comment>
<comment type="PTM">
    <text evidence="5">Phosphorylated by NEK6.</text>
</comment>
<comment type="disease" evidence="6">
    <disease id="DI-04043">
        <name>Bone marrow failure syndrome 2</name>
        <acronym>BMFS2</acronym>
        <description>An autosomal recessive disorder characterized by trilineage bone marrow failure, bone marrow hypocellularity, learning difficulties, and microcephaly. Insufficient hematopoiesis results in peripheral blood cytopenias, affecting myeloid, erythroid and megakaryocyte lines. Cutaneous features and increased chromosome breakage are not features.</description>
        <dbReference type="MIM" id="615715"/>
    </disease>
    <text>The disease is caused by variants affecting the gene represented in this entry.</text>
</comment>
<comment type="similarity">
    <text evidence="12">Belongs to the SNF2/RAD54 helicase family.</text>
</comment>
<comment type="sequence caution" evidence="12">
    <conflict type="erroneous initiation">
        <sequence resource="EMBL-CDS" id="AAH22957"/>
    </conflict>
    <text>Truncated N-terminus.</text>
</comment>
<comment type="sequence caution" evidence="12">
    <conflict type="miscellaneous discrepancy">
        <sequence resource="EMBL-CDS" id="AAH35183"/>
    </conflict>
    <text>Probable cloning artifact.</text>
</comment>
<comment type="sequence caution" evidence="12">
    <conflict type="erroneous initiation">
        <sequence resource="EMBL-CDS" id="AAI40703"/>
    </conflict>
    <text>Extended N-terminus.</text>
</comment>
<comment type="sequence caution" evidence="12">
    <conflict type="erroneous initiation">
        <sequence resource="EMBL-CDS" id="CAB97543"/>
    </conflict>
    <text>Truncated N-terminus.</text>
</comment>
<comment type="sequence caution" evidence="12">
    <conflict type="frameshift">
        <sequence resource="EMBL-CDS" id="CAB97543"/>
    </conflict>
</comment>
<comment type="sequence caution" evidence="12">
    <conflict type="erroneous gene model prediction">
        <sequence resource="EMBL-CDS" id="EAW92636"/>
    </conflict>
</comment>
<comment type="sequence caution" evidence="12">
    <conflict type="erroneous gene model prediction">
        <sequence resource="EMBL-CDS" id="EAW92640"/>
    </conflict>
</comment>
<dbReference type="EC" id="3.6.4.-"/>
<dbReference type="EMBL" id="AL159167">
    <property type="status" value="NOT_ANNOTATED_CDS"/>
    <property type="molecule type" value="Genomic_DNA"/>
</dbReference>
<dbReference type="EMBL" id="AL161454">
    <property type="status" value="NOT_ANNOTATED_CDS"/>
    <property type="molecule type" value="Genomic_DNA"/>
</dbReference>
<dbReference type="EMBL" id="KF458935">
    <property type="status" value="NOT_ANNOTATED_CDS"/>
    <property type="molecule type" value="Genomic_DNA"/>
</dbReference>
<dbReference type="EMBL" id="CH471174">
    <property type="protein sequence ID" value="EAW92636.1"/>
    <property type="status" value="ALT_SEQ"/>
    <property type="molecule type" value="Genomic_DNA"/>
</dbReference>
<dbReference type="EMBL" id="CH471174">
    <property type="protein sequence ID" value="EAW92640.1"/>
    <property type="status" value="ALT_SEQ"/>
    <property type="molecule type" value="Genomic_DNA"/>
</dbReference>
<dbReference type="EMBL" id="BC022957">
    <property type="protein sequence ID" value="AAH22957.3"/>
    <property type="status" value="ALT_INIT"/>
    <property type="molecule type" value="mRNA"/>
</dbReference>
<dbReference type="EMBL" id="BC035183">
    <property type="protein sequence ID" value="AAH35183.1"/>
    <property type="status" value="ALT_SEQ"/>
    <property type="molecule type" value="mRNA"/>
</dbReference>
<dbReference type="EMBL" id="BC140702">
    <property type="protein sequence ID" value="AAI40703.1"/>
    <property type="status" value="ALT_INIT"/>
    <property type="molecule type" value="mRNA"/>
</dbReference>
<dbReference type="EMBL" id="AL389953">
    <property type="protein sequence ID" value="CAB97543.1"/>
    <property type="status" value="ALT_SEQ"/>
    <property type="molecule type" value="mRNA"/>
</dbReference>
<dbReference type="EMBL" id="AK095025">
    <property type="protein sequence ID" value="BAC04478.1"/>
    <property type="molecule type" value="mRNA"/>
</dbReference>
<dbReference type="CCDS" id="CCDS35072.2">
    <molecule id="Q5T890-2"/>
</dbReference>
<dbReference type="CCDS" id="CCDS94443.1">
    <molecule id="Q5T890-1"/>
</dbReference>
<dbReference type="RefSeq" id="NP_001010895.2">
    <molecule id="Q5T890-2"/>
    <property type="nucleotide sequence ID" value="NM_001010895.4"/>
</dbReference>
<dbReference type="RefSeq" id="NP_064592.3">
    <molecule id="Q5T890-1"/>
    <property type="nucleotide sequence ID" value="NM_020207.7"/>
</dbReference>
<dbReference type="PDB" id="6HQ9">
    <property type="method" value="X-ray"/>
    <property type="resolution" value="1.98 A"/>
    <property type="chains" value="A/B=15-81"/>
</dbReference>
<dbReference type="PDB" id="8COB">
    <property type="method" value="X-ray"/>
    <property type="resolution" value="2.73 A"/>
    <property type="chains" value="B/D/F=794-808"/>
</dbReference>
<dbReference type="PDBsum" id="6HQ9"/>
<dbReference type="PDBsum" id="8COB"/>
<dbReference type="SMR" id="Q5T890"/>
<dbReference type="BioGRID" id="131996">
    <property type="interactions" value="8"/>
</dbReference>
<dbReference type="FunCoup" id="Q5T890">
    <property type="interactions" value="2733"/>
</dbReference>
<dbReference type="IntAct" id="Q5T890">
    <property type="interactions" value="7"/>
</dbReference>
<dbReference type="STRING" id="9606.ENSP00000499371"/>
<dbReference type="CarbonylDB" id="Q5T890"/>
<dbReference type="iPTMnet" id="Q5T890"/>
<dbReference type="PhosphoSitePlus" id="Q5T890"/>
<dbReference type="BioMuta" id="ERCC6L2"/>
<dbReference type="DMDM" id="74756405"/>
<dbReference type="jPOST" id="Q5T890"/>
<dbReference type="MassIVE" id="Q5T890"/>
<dbReference type="PaxDb" id="9606-ENSP00000288985"/>
<dbReference type="PeptideAtlas" id="Q5T890"/>
<dbReference type="Antibodypedia" id="55361">
    <property type="antibodies" value="164 antibodies from 20 providers"/>
</dbReference>
<dbReference type="DNASU" id="375748"/>
<dbReference type="Ensembl" id="ENST00000288985.13">
    <molecule id="Q5T890-2"/>
    <property type="protein sequence ID" value="ENSP00000288985.8"/>
    <property type="gene ID" value="ENSG00000182150.20"/>
</dbReference>
<dbReference type="Ensembl" id="ENST00000653738.2">
    <molecule id="Q5T890-1"/>
    <property type="protein sequence ID" value="ENSP00000499221.2"/>
    <property type="gene ID" value="ENSG00000182150.20"/>
</dbReference>
<dbReference type="Ensembl" id="ENST00000682983.1">
    <molecule id="Q5T890-1"/>
    <property type="protein sequence ID" value="ENSP00000507518.1"/>
    <property type="gene ID" value="ENSG00000182150.20"/>
</dbReference>
<dbReference type="GeneID" id="375748"/>
<dbReference type="KEGG" id="hsa:375748"/>
<dbReference type="MANE-Select" id="ENST00000653738.2">
    <property type="protein sequence ID" value="ENSP00000499221.2"/>
    <property type="RefSeq nucleotide sequence ID" value="NM_020207.7"/>
    <property type="RefSeq protein sequence ID" value="NP_064592.3"/>
</dbReference>
<dbReference type="UCSC" id="uc004avt.5">
    <molecule id="Q5T890-1"/>
    <property type="organism name" value="human"/>
</dbReference>
<dbReference type="AGR" id="HGNC:26922"/>
<dbReference type="CTD" id="375748"/>
<dbReference type="DisGeNET" id="375748"/>
<dbReference type="GeneCards" id="ERCC6L2"/>
<dbReference type="HGNC" id="HGNC:26922">
    <property type="gene designation" value="ERCC6L2"/>
</dbReference>
<dbReference type="HPA" id="ENSG00000182150">
    <property type="expression patterns" value="Low tissue specificity"/>
</dbReference>
<dbReference type="MalaCards" id="ERCC6L2"/>
<dbReference type="MIM" id="615667">
    <property type="type" value="gene"/>
</dbReference>
<dbReference type="MIM" id="615715">
    <property type="type" value="phenotype"/>
</dbReference>
<dbReference type="neXtProt" id="NX_Q5T890"/>
<dbReference type="OpenTargets" id="ENSG00000182150"/>
<dbReference type="Orphanet" id="319465">
    <property type="disease" value="Inherited acute myeloid leukemia"/>
</dbReference>
<dbReference type="Orphanet" id="401764">
    <property type="disease" value="Pancytopenia-developmental delay syndrome"/>
</dbReference>
<dbReference type="PharmGKB" id="PA134961240"/>
<dbReference type="VEuPathDB" id="HostDB:ENSG00000182150"/>
<dbReference type="eggNOG" id="KOG0387">
    <property type="taxonomic scope" value="Eukaryota"/>
</dbReference>
<dbReference type="GeneTree" id="ENSGT00940000163752"/>
<dbReference type="HOGENOM" id="CLU_000315_17_10_1"/>
<dbReference type="InParanoid" id="Q5T890"/>
<dbReference type="OMA" id="PDSEPCH"/>
<dbReference type="OrthoDB" id="448448at2759"/>
<dbReference type="PAN-GO" id="Q5T890">
    <property type="GO annotations" value="0 GO annotations based on evolutionary models"/>
</dbReference>
<dbReference type="TreeFam" id="TF351516"/>
<dbReference type="PathwayCommons" id="Q5T890"/>
<dbReference type="SignaLink" id="Q5T890"/>
<dbReference type="BioGRID-ORCS" id="375748">
    <property type="hits" value="20 hits in 1153 CRISPR screens"/>
</dbReference>
<dbReference type="ChiTaRS" id="ERCC6L2">
    <property type="organism name" value="human"/>
</dbReference>
<dbReference type="GenomeRNAi" id="375748"/>
<dbReference type="Pharos" id="Q5T890">
    <property type="development level" value="Tbio"/>
</dbReference>
<dbReference type="PRO" id="PR:Q5T890"/>
<dbReference type="Proteomes" id="UP000005640">
    <property type="component" value="Chromosome 9"/>
</dbReference>
<dbReference type="RNAct" id="Q5T890">
    <property type="molecule type" value="protein"/>
</dbReference>
<dbReference type="Bgee" id="ENSG00000182150">
    <property type="expression patterns" value="Expressed in epithelial cell of pancreas and 191 other cell types or tissues"/>
</dbReference>
<dbReference type="ExpressionAtlas" id="Q5T890">
    <property type="expression patterns" value="baseline and differential"/>
</dbReference>
<dbReference type="GO" id="GO:0005813">
    <property type="term" value="C:centrosome"/>
    <property type="evidence" value="ECO:0007669"/>
    <property type="project" value="UniProtKB-SubCell"/>
</dbReference>
<dbReference type="GO" id="GO:0000775">
    <property type="term" value="C:chromosome, centromeric region"/>
    <property type="evidence" value="ECO:0000314"/>
    <property type="project" value="UniProtKB"/>
</dbReference>
<dbReference type="GO" id="GO:0005737">
    <property type="term" value="C:cytoplasm"/>
    <property type="evidence" value="ECO:0000315"/>
    <property type="project" value="UniProtKB"/>
</dbReference>
<dbReference type="GO" id="GO:0005739">
    <property type="term" value="C:mitochondrion"/>
    <property type="evidence" value="ECO:0000315"/>
    <property type="project" value="UniProtKB"/>
</dbReference>
<dbReference type="GO" id="GO:0005634">
    <property type="term" value="C:nucleus"/>
    <property type="evidence" value="ECO:0000314"/>
    <property type="project" value="UniProtKB"/>
</dbReference>
<dbReference type="GO" id="GO:0032991">
    <property type="term" value="C:protein-containing complex"/>
    <property type="evidence" value="ECO:0000314"/>
    <property type="project" value="UniProtKB"/>
</dbReference>
<dbReference type="GO" id="GO:0005524">
    <property type="term" value="F:ATP binding"/>
    <property type="evidence" value="ECO:0007669"/>
    <property type="project" value="UniProtKB-KW"/>
</dbReference>
<dbReference type="GO" id="GO:0003677">
    <property type="term" value="F:DNA binding"/>
    <property type="evidence" value="ECO:0007669"/>
    <property type="project" value="UniProtKB-KW"/>
</dbReference>
<dbReference type="GO" id="GO:0004386">
    <property type="term" value="F:helicase activity"/>
    <property type="evidence" value="ECO:0007669"/>
    <property type="project" value="UniProtKB-KW"/>
</dbReference>
<dbReference type="GO" id="GO:0016787">
    <property type="term" value="F:hydrolase activity"/>
    <property type="evidence" value="ECO:0007669"/>
    <property type="project" value="UniProtKB-KW"/>
</dbReference>
<dbReference type="GO" id="GO:0019901">
    <property type="term" value="F:protein kinase binding"/>
    <property type="evidence" value="ECO:0000353"/>
    <property type="project" value="UniProtKB"/>
</dbReference>
<dbReference type="GO" id="GO:0034614">
    <property type="term" value="P:cellular response to reactive oxygen species"/>
    <property type="evidence" value="ECO:0000315"/>
    <property type="project" value="UniProtKB"/>
</dbReference>
<dbReference type="GO" id="GO:0006974">
    <property type="term" value="P:DNA damage response"/>
    <property type="evidence" value="ECO:0000314"/>
    <property type="project" value="UniProtKB"/>
</dbReference>
<dbReference type="GO" id="GO:0097680">
    <property type="term" value="P:double-strand break repair via classical nonhomologous end joining"/>
    <property type="evidence" value="ECO:0000314"/>
    <property type="project" value="UniProtKB"/>
</dbReference>
<dbReference type="GO" id="GO:0036297">
    <property type="term" value="P:interstrand cross-link repair"/>
    <property type="evidence" value="ECO:0000315"/>
    <property type="project" value="UniProtKB"/>
</dbReference>
<dbReference type="CDD" id="cd18005">
    <property type="entry name" value="DEXHc_ERCC6L2"/>
    <property type="match status" value="1"/>
</dbReference>
<dbReference type="CDD" id="cd18793">
    <property type="entry name" value="SF2_C_SNF"/>
    <property type="match status" value="1"/>
</dbReference>
<dbReference type="CDD" id="cd20400">
    <property type="entry name" value="Tudor_ERCC6L2"/>
    <property type="match status" value="1"/>
</dbReference>
<dbReference type="FunFam" id="3.40.50.10810:FF:000019">
    <property type="entry name" value="DNA excision repair protein ERCC-6-like 2 isoform X1"/>
    <property type="match status" value="1"/>
</dbReference>
<dbReference type="FunFam" id="3.40.50.300:FF:000821">
    <property type="entry name" value="DNA excision repair protein ERCC-6-like 2 isoform X1"/>
    <property type="match status" value="1"/>
</dbReference>
<dbReference type="Gene3D" id="3.40.50.300">
    <property type="entry name" value="P-loop containing nucleotide triphosphate hydrolases"/>
    <property type="match status" value="1"/>
</dbReference>
<dbReference type="Gene3D" id="3.40.50.10810">
    <property type="entry name" value="Tandem AAA-ATPase domain"/>
    <property type="match status" value="1"/>
</dbReference>
<dbReference type="InterPro" id="IPR002464">
    <property type="entry name" value="DNA/RNA_helicase_DEAH_CS"/>
</dbReference>
<dbReference type="InterPro" id="IPR014001">
    <property type="entry name" value="Helicase_ATP-bd"/>
</dbReference>
<dbReference type="InterPro" id="IPR001650">
    <property type="entry name" value="Helicase_C-like"/>
</dbReference>
<dbReference type="InterPro" id="IPR029256">
    <property type="entry name" value="Heliccase-ass-bd"/>
</dbReference>
<dbReference type="InterPro" id="IPR027417">
    <property type="entry name" value="P-loop_NTPase"/>
</dbReference>
<dbReference type="InterPro" id="IPR038718">
    <property type="entry name" value="SNF2-like_sf"/>
</dbReference>
<dbReference type="InterPro" id="IPR049730">
    <property type="entry name" value="SNF2/RAD54-like_C"/>
</dbReference>
<dbReference type="InterPro" id="IPR000330">
    <property type="entry name" value="SNF2_N"/>
</dbReference>
<dbReference type="InterPro" id="IPR050496">
    <property type="entry name" value="SNF2_RAD54_helicase_repair"/>
</dbReference>
<dbReference type="PANTHER" id="PTHR45629:SF7">
    <property type="entry name" value="DNA EXCISION REPAIR PROTEIN ERCC-6-RELATED"/>
    <property type="match status" value="1"/>
</dbReference>
<dbReference type="PANTHER" id="PTHR45629">
    <property type="entry name" value="SNF2/RAD54 FAMILY MEMBER"/>
    <property type="match status" value="1"/>
</dbReference>
<dbReference type="Pfam" id="PF00271">
    <property type="entry name" value="Helicase_C"/>
    <property type="match status" value="1"/>
</dbReference>
<dbReference type="Pfam" id="PF00176">
    <property type="entry name" value="SNF2-rel_dom"/>
    <property type="match status" value="1"/>
</dbReference>
<dbReference type="Pfam" id="PF14773">
    <property type="entry name" value="VIGSSK"/>
    <property type="match status" value="1"/>
</dbReference>
<dbReference type="SMART" id="SM00487">
    <property type="entry name" value="DEXDc"/>
    <property type="match status" value="1"/>
</dbReference>
<dbReference type="SMART" id="SM00490">
    <property type="entry name" value="HELICc"/>
    <property type="match status" value="1"/>
</dbReference>
<dbReference type="SUPFAM" id="SSF52540">
    <property type="entry name" value="P-loop containing nucleoside triphosphate hydrolases"/>
    <property type="match status" value="2"/>
</dbReference>
<dbReference type="PROSITE" id="PS00690">
    <property type="entry name" value="DEAH_ATP_HELICASE"/>
    <property type="match status" value="1"/>
</dbReference>
<dbReference type="PROSITE" id="PS51192">
    <property type="entry name" value="HELICASE_ATP_BIND_1"/>
    <property type="match status" value="1"/>
</dbReference>
<dbReference type="PROSITE" id="PS51194">
    <property type="entry name" value="HELICASE_CTER"/>
    <property type="match status" value="1"/>
</dbReference>
<protein>
    <recommendedName>
        <fullName evidence="12">DNA excision repair protein ERCC-6-like 2</fullName>
        <ecNumber>3.6.4.-</ecNumber>
    </recommendedName>
    <alternativeName>
        <fullName>DNA repair and recombination protein RAD26-like</fullName>
    </alternativeName>
    <alternativeName>
        <fullName evidence="10">Excision repair cross-complementation group 6-like 2</fullName>
    </alternativeName>
</protein>
<reference key="1">
    <citation type="journal article" date="2004" name="Nature">
        <title>DNA sequence and analysis of human chromosome 9.</title>
        <authorList>
            <person name="Humphray S.J."/>
            <person name="Oliver K."/>
            <person name="Hunt A.R."/>
            <person name="Plumb R.W."/>
            <person name="Loveland J.E."/>
            <person name="Howe K.L."/>
            <person name="Andrews T.D."/>
            <person name="Searle S."/>
            <person name="Hunt S.E."/>
            <person name="Scott C.E."/>
            <person name="Jones M.C."/>
            <person name="Ainscough R."/>
            <person name="Almeida J.P."/>
            <person name="Ambrose K.D."/>
            <person name="Ashwell R.I.S."/>
            <person name="Babbage A.K."/>
            <person name="Babbage S."/>
            <person name="Bagguley C.L."/>
            <person name="Bailey J."/>
            <person name="Banerjee R."/>
            <person name="Barker D.J."/>
            <person name="Barlow K.F."/>
            <person name="Bates K."/>
            <person name="Beasley H."/>
            <person name="Beasley O."/>
            <person name="Bird C.P."/>
            <person name="Bray-Allen S."/>
            <person name="Brown A.J."/>
            <person name="Brown J.Y."/>
            <person name="Burford D."/>
            <person name="Burrill W."/>
            <person name="Burton J."/>
            <person name="Carder C."/>
            <person name="Carter N.P."/>
            <person name="Chapman J.C."/>
            <person name="Chen Y."/>
            <person name="Clarke G."/>
            <person name="Clark S.Y."/>
            <person name="Clee C.M."/>
            <person name="Clegg S."/>
            <person name="Collier R.E."/>
            <person name="Corby N."/>
            <person name="Crosier M."/>
            <person name="Cummings A.T."/>
            <person name="Davies J."/>
            <person name="Dhami P."/>
            <person name="Dunn M."/>
            <person name="Dutta I."/>
            <person name="Dyer L.W."/>
            <person name="Earthrowl M.E."/>
            <person name="Faulkner L."/>
            <person name="Fleming C.J."/>
            <person name="Frankish A."/>
            <person name="Frankland J.A."/>
            <person name="French L."/>
            <person name="Fricker D.G."/>
            <person name="Garner P."/>
            <person name="Garnett J."/>
            <person name="Ghori J."/>
            <person name="Gilbert J.G.R."/>
            <person name="Glison C."/>
            <person name="Grafham D.V."/>
            <person name="Gribble S."/>
            <person name="Griffiths C."/>
            <person name="Griffiths-Jones S."/>
            <person name="Grocock R."/>
            <person name="Guy J."/>
            <person name="Hall R.E."/>
            <person name="Hammond S."/>
            <person name="Harley J.L."/>
            <person name="Harrison E.S.I."/>
            <person name="Hart E.A."/>
            <person name="Heath P.D."/>
            <person name="Henderson C.D."/>
            <person name="Hopkins B.L."/>
            <person name="Howard P.J."/>
            <person name="Howden P.J."/>
            <person name="Huckle E."/>
            <person name="Johnson C."/>
            <person name="Johnson D."/>
            <person name="Joy A.A."/>
            <person name="Kay M."/>
            <person name="Keenan S."/>
            <person name="Kershaw J.K."/>
            <person name="Kimberley A.M."/>
            <person name="King A."/>
            <person name="Knights A."/>
            <person name="Laird G.K."/>
            <person name="Langford C."/>
            <person name="Lawlor S."/>
            <person name="Leongamornlert D.A."/>
            <person name="Leversha M."/>
            <person name="Lloyd C."/>
            <person name="Lloyd D.M."/>
            <person name="Lovell J."/>
            <person name="Martin S."/>
            <person name="Mashreghi-Mohammadi M."/>
            <person name="Matthews L."/>
            <person name="McLaren S."/>
            <person name="McLay K.E."/>
            <person name="McMurray A."/>
            <person name="Milne S."/>
            <person name="Nickerson T."/>
            <person name="Nisbett J."/>
            <person name="Nordsiek G."/>
            <person name="Pearce A.V."/>
            <person name="Peck A.I."/>
            <person name="Porter K.M."/>
            <person name="Pandian R."/>
            <person name="Pelan S."/>
            <person name="Phillimore B."/>
            <person name="Povey S."/>
            <person name="Ramsey Y."/>
            <person name="Rand V."/>
            <person name="Scharfe M."/>
            <person name="Sehra H.K."/>
            <person name="Shownkeen R."/>
            <person name="Sims S.K."/>
            <person name="Skuce C.D."/>
            <person name="Smith M."/>
            <person name="Steward C.A."/>
            <person name="Swarbreck D."/>
            <person name="Sycamore N."/>
            <person name="Tester J."/>
            <person name="Thorpe A."/>
            <person name="Tracey A."/>
            <person name="Tromans A."/>
            <person name="Thomas D.W."/>
            <person name="Wall M."/>
            <person name="Wallis J.M."/>
            <person name="West A.P."/>
            <person name="Whitehead S.L."/>
            <person name="Willey D.L."/>
            <person name="Williams S.A."/>
            <person name="Wilming L."/>
            <person name="Wray P.W."/>
            <person name="Young L."/>
            <person name="Ashurst J.L."/>
            <person name="Coulson A."/>
            <person name="Blocker H."/>
            <person name="Durbin R.M."/>
            <person name="Sulston J.E."/>
            <person name="Hubbard T."/>
            <person name="Jackson M.J."/>
            <person name="Bentley D.R."/>
            <person name="Beck S."/>
            <person name="Rogers J."/>
            <person name="Dunham I."/>
        </authorList>
    </citation>
    <scope>NUCLEOTIDE SEQUENCE [LARGE SCALE GENOMIC DNA]</scope>
</reference>
<reference key="2">
    <citation type="submission" date="2005-07" db="EMBL/GenBank/DDBJ databases">
        <authorList>
            <person name="Mural R.J."/>
            <person name="Istrail S."/>
            <person name="Sutton G.G."/>
            <person name="Florea L."/>
            <person name="Halpern A.L."/>
            <person name="Mobarry C.M."/>
            <person name="Lippert R."/>
            <person name="Walenz B."/>
            <person name="Shatkay H."/>
            <person name="Dew I."/>
            <person name="Miller J.R."/>
            <person name="Flanigan M.J."/>
            <person name="Edwards N.J."/>
            <person name="Bolanos R."/>
            <person name="Fasulo D."/>
            <person name="Halldorsson B.V."/>
            <person name="Hannenhalli S."/>
            <person name="Turner R."/>
            <person name="Yooseph S."/>
            <person name="Lu F."/>
            <person name="Nusskern D.R."/>
            <person name="Shue B.C."/>
            <person name="Zheng X.H."/>
            <person name="Zhong F."/>
            <person name="Delcher A.L."/>
            <person name="Huson D.H."/>
            <person name="Kravitz S.A."/>
            <person name="Mouchard L."/>
            <person name="Reinert K."/>
            <person name="Remington K.A."/>
            <person name="Clark A.G."/>
            <person name="Waterman M.S."/>
            <person name="Eichler E.E."/>
            <person name="Adams M.D."/>
            <person name="Hunkapiller M.W."/>
            <person name="Myers E.W."/>
            <person name="Venter J.C."/>
        </authorList>
    </citation>
    <scope>NUCLEOTIDE SEQUENCE [LARGE SCALE GENOMIC DNA]</scope>
</reference>
<reference key="3">
    <citation type="journal article" date="2004" name="Genome Res.">
        <title>The status, quality, and expansion of the NIH full-length cDNA project: the Mammalian Gene Collection (MGC).</title>
        <authorList>
            <consortium name="The MGC Project Team"/>
        </authorList>
    </citation>
    <scope>NUCLEOTIDE SEQUENCE [LARGE SCALE MRNA] (ISOFORM 2)</scope>
    <scope>NUCLEOTIDE SEQUENCE [LARGE SCALE MRNA] OF 1051-1550 (ISOFORM 1)</scope>
    <source>
        <tissue>Placenta</tissue>
        <tissue>Testis</tissue>
    </source>
</reference>
<reference key="4">
    <citation type="submission" date="2000-07" db="EMBL/GenBank/DDBJ databases">
        <authorList>
            <consortium name="The European IMAGE consortium"/>
        </authorList>
    </citation>
    <scope>NUCLEOTIDE SEQUENCE [LARGE SCALE MRNA] OF 1-354 (ISOFORM 1/2)</scope>
</reference>
<reference key="5">
    <citation type="journal article" date="2004" name="Nat. Genet.">
        <title>Complete sequencing and characterization of 21,243 full-length human cDNAs.</title>
        <authorList>
            <person name="Ota T."/>
            <person name="Suzuki Y."/>
            <person name="Nishikawa T."/>
            <person name="Otsuki T."/>
            <person name="Sugiyama T."/>
            <person name="Irie R."/>
            <person name="Wakamatsu A."/>
            <person name="Hayashi K."/>
            <person name="Sato H."/>
            <person name="Nagai K."/>
            <person name="Kimura K."/>
            <person name="Makita H."/>
            <person name="Sekine M."/>
            <person name="Obayashi M."/>
            <person name="Nishi T."/>
            <person name="Shibahara T."/>
            <person name="Tanaka T."/>
            <person name="Ishii S."/>
            <person name="Yamamoto J."/>
            <person name="Saito K."/>
            <person name="Kawai Y."/>
            <person name="Isono Y."/>
            <person name="Nakamura Y."/>
            <person name="Nagahari K."/>
            <person name="Murakami K."/>
            <person name="Yasuda T."/>
            <person name="Iwayanagi T."/>
            <person name="Wagatsuma M."/>
            <person name="Shiratori A."/>
            <person name="Sudo H."/>
            <person name="Hosoiri T."/>
            <person name="Kaku Y."/>
            <person name="Kodaira H."/>
            <person name="Kondo H."/>
            <person name="Sugawara M."/>
            <person name="Takahashi M."/>
            <person name="Kanda K."/>
            <person name="Yokoi T."/>
            <person name="Furuya T."/>
            <person name="Kikkawa E."/>
            <person name="Omura Y."/>
            <person name="Abe K."/>
            <person name="Kamihara K."/>
            <person name="Katsuta N."/>
            <person name="Sato K."/>
            <person name="Tanikawa M."/>
            <person name="Yamazaki M."/>
            <person name="Ninomiya K."/>
            <person name="Ishibashi T."/>
            <person name="Yamashita H."/>
            <person name="Murakawa K."/>
            <person name="Fujimori K."/>
            <person name="Tanai H."/>
            <person name="Kimata M."/>
            <person name="Watanabe M."/>
            <person name="Hiraoka S."/>
            <person name="Chiba Y."/>
            <person name="Ishida S."/>
            <person name="Ono Y."/>
            <person name="Takiguchi S."/>
            <person name="Watanabe S."/>
            <person name="Yosida M."/>
            <person name="Hotuta T."/>
            <person name="Kusano J."/>
            <person name="Kanehori K."/>
            <person name="Takahashi-Fujii A."/>
            <person name="Hara H."/>
            <person name="Tanase T.-O."/>
            <person name="Nomura Y."/>
            <person name="Togiya S."/>
            <person name="Komai F."/>
            <person name="Hara R."/>
            <person name="Takeuchi K."/>
            <person name="Arita M."/>
            <person name="Imose N."/>
            <person name="Musashino K."/>
            <person name="Yuuki H."/>
            <person name="Oshima A."/>
            <person name="Sasaki N."/>
            <person name="Aotsuka S."/>
            <person name="Yoshikawa Y."/>
            <person name="Matsunawa H."/>
            <person name="Ichihara T."/>
            <person name="Shiohata N."/>
            <person name="Sano S."/>
            <person name="Moriya S."/>
            <person name="Momiyama H."/>
            <person name="Satoh N."/>
            <person name="Takami S."/>
            <person name="Terashima Y."/>
            <person name="Suzuki O."/>
            <person name="Nakagawa S."/>
            <person name="Senoh A."/>
            <person name="Mizoguchi H."/>
            <person name="Goto Y."/>
            <person name="Shimizu F."/>
            <person name="Wakebe H."/>
            <person name="Hishigaki H."/>
            <person name="Watanabe T."/>
            <person name="Sugiyama A."/>
            <person name="Takemoto M."/>
            <person name="Kawakami B."/>
            <person name="Yamazaki M."/>
            <person name="Watanabe K."/>
            <person name="Kumagai A."/>
            <person name="Itakura S."/>
            <person name="Fukuzumi Y."/>
            <person name="Fujimori Y."/>
            <person name="Komiyama M."/>
            <person name="Tashiro H."/>
            <person name="Tanigami A."/>
            <person name="Fujiwara T."/>
            <person name="Ono T."/>
            <person name="Yamada K."/>
            <person name="Fujii Y."/>
            <person name="Ozaki K."/>
            <person name="Hirao M."/>
            <person name="Ohmori Y."/>
            <person name="Kawabata A."/>
            <person name="Hikiji T."/>
            <person name="Kobatake N."/>
            <person name="Inagaki H."/>
            <person name="Ikema Y."/>
            <person name="Okamoto S."/>
            <person name="Okitani R."/>
            <person name="Kawakami T."/>
            <person name="Noguchi S."/>
            <person name="Itoh T."/>
            <person name="Shigeta K."/>
            <person name="Senba T."/>
            <person name="Matsumura K."/>
            <person name="Nakajima Y."/>
            <person name="Mizuno T."/>
            <person name="Morinaga M."/>
            <person name="Sasaki M."/>
            <person name="Togashi T."/>
            <person name="Oyama M."/>
            <person name="Hata H."/>
            <person name="Watanabe M."/>
            <person name="Komatsu T."/>
            <person name="Mizushima-Sugano J."/>
            <person name="Satoh T."/>
            <person name="Shirai Y."/>
            <person name="Takahashi Y."/>
            <person name="Nakagawa K."/>
            <person name="Okumura K."/>
            <person name="Nagase T."/>
            <person name="Nomura N."/>
            <person name="Kikuchi H."/>
            <person name="Masuho Y."/>
            <person name="Yamashita R."/>
            <person name="Nakai K."/>
            <person name="Yada T."/>
            <person name="Nakamura Y."/>
            <person name="Ohara O."/>
            <person name="Isogai T."/>
            <person name="Sugano S."/>
        </authorList>
    </citation>
    <scope>NUCLEOTIDE SEQUENCE [LARGE SCALE MRNA] OF 1258-1550 (ISOFORM 1)</scope>
    <source>
        <tissue>Hippocampus</tissue>
    </source>
</reference>
<reference key="6">
    <citation type="journal article" date="2008" name="Proc. Natl. Acad. Sci. U.S.A.">
        <title>A quantitative atlas of mitotic phosphorylation.</title>
        <authorList>
            <person name="Dephoure N."/>
            <person name="Zhou C."/>
            <person name="Villen J."/>
            <person name="Beausoleil S.A."/>
            <person name="Bakalarski C.E."/>
            <person name="Elledge S.J."/>
            <person name="Gygi S.P."/>
        </authorList>
    </citation>
    <scope>PHOSPHORYLATION [LARGE SCALE ANALYSIS] AT SER-1373 AND SER-1376</scope>
    <scope>IDENTIFICATION BY MASS SPECTROMETRY [LARGE SCALE ANALYSIS]</scope>
    <source>
        <tissue>Cervix carcinoma</tissue>
    </source>
</reference>
<reference key="7">
    <citation type="journal article" date="2010" name="J. Proteome Res.">
        <title>Characterization of hNek6 interactome reveals an important role for its short N-terminal domain and colocalization with proteins at the centrosome.</title>
        <authorList>
            <person name="Vaz Meirelles G."/>
            <person name="Ferreira Lanza D.C."/>
            <person name="da Silva J.C."/>
            <person name="Santana Bernachi J."/>
            <person name="Paes Leme A.F."/>
            <person name="Kobarg J."/>
        </authorList>
    </citation>
    <scope>SUBCELLULAR LOCATION</scope>
    <scope>INTERACTION WITH NEK6</scope>
    <scope>PHOSPHORYLATION</scope>
</reference>
<reference key="8">
    <citation type="journal article" date="2012" name="Proc. Natl. Acad. Sci. U.S.A.">
        <title>N-terminal acetylome analyses and functional insights of the N-terminal acetyltransferase NatB.</title>
        <authorList>
            <person name="Van Damme P."/>
            <person name="Lasa M."/>
            <person name="Polevoda B."/>
            <person name="Gazquez C."/>
            <person name="Elosegui-Artola A."/>
            <person name="Kim D.S."/>
            <person name="De Juan-Pardo E."/>
            <person name="Demeyer K."/>
            <person name="Hole K."/>
            <person name="Larrea E."/>
            <person name="Timmerman E."/>
            <person name="Prieto J."/>
            <person name="Arnesen T."/>
            <person name="Sherman F."/>
            <person name="Gevaert K."/>
            <person name="Aldabe R."/>
        </authorList>
    </citation>
    <scope>IDENTIFICATION BY MASS SPECTROMETRY [LARGE SCALE ANALYSIS]</scope>
</reference>
<reference key="9">
    <citation type="journal article" date="2014" name="Am. J. Hum. Genet.">
        <title>ERCC6L2 mutations link a distinct bone-marrow-failure syndrome to DNA repair and mitochondrial function.</title>
        <authorList>
            <person name="Tummala H."/>
            <person name="Kirwan M."/>
            <person name="Walne A.J."/>
            <person name="Hossain U."/>
            <person name="Jackson N."/>
            <person name="Pondarre C."/>
            <person name="Plagnol V."/>
            <person name="Vulliamy T."/>
            <person name="Dokal I."/>
        </authorList>
    </citation>
    <scope>INVOLVEMENT IN BMFS2</scope>
    <scope>FUNCTION</scope>
    <scope>SUBCELLULAR LOCATION</scope>
    <scope>TISSUE SPECIFICITY</scope>
</reference>
<reference key="10">
    <citation type="journal article" date="2014" name="J. Proteomics">
        <title>An enzyme assisted RP-RPLC approach for in-depth analysis of human liver phosphoproteome.</title>
        <authorList>
            <person name="Bian Y."/>
            <person name="Song C."/>
            <person name="Cheng K."/>
            <person name="Dong M."/>
            <person name="Wang F."/>
            <person name="Huang J."/>
            <person name="Sun D."/>
            <person name="Wang L."/>
            <person name="Ye M."/>
            <person name="Zou H."/>
        </authorList>
    </citation>
    <scope>IDENTIFICATION BY MASS SPECTROMETRY [LARGE SCALE ANALYSIS]</scope>
    <source>
        <tissue>Liver</tissue>
    </source>
</reference>
<reference key="11">
    <citation type="journal article" date="2020" name="Cell Res.">
        <title>ERCC6L2 promotes DNA orientation-specific recombination in mammalian cells.</title>
        <authorList>
            <person name="Liu X."/>
            <person name="Liu T."/>
            <person name="Shang Y."/>
            <person name="Dai P."/>
            <person name="Zhang W."/>
            <person name="Lee B.J."/>
            <person name="Huang M."/>
            <person name="Yang D."/>
            <person name="Wu Q."/>
            <person name="Liu L.D."/>
            <person name="Zheng X."/>
            <person name="Zhou B.O."/>
            <person name="Dong J."/>
            <person name="Yeap L.S."/>
            <person name="Hu J."/>
            <person name="Xiao T."/>
            <person name="Zha S."/>
            <person name="Casellas R."/>
            <person name="Liu X.S."/>
            <person name="Meng F.L."/>
        </authorList>
    </citation>
    <scope>FUNCTION</scope>
    <scope>SUBCELLULAR LOCATION</scope>
    <scope>INTERACTION WITH CYREN</scope>
</reference>
<reference evidence="14" key="12">
    <citation type="journal article" date="2023" name="Cell Rep.">
        <title>ERCC6L2 mitigates replication stress and promotes centromere stability.</title>
        <authorList>
            <person name="Carnie C.J."/>
            <person name="Armstrong L."/>
            <person name="Sebesta M."/>
            <person name="Ariza A."/>
            <person name="Wang X."/>
            <person name="Graham E."/>
            <person name="Zhu K."/>
            <person name="Ahel D."/>
        </authorList>
    </citation>
    <scope>X-RAY CRYSTALLOGRAPHY (2.73 ANGSTROMS) OF 783-797 IN COMPLEX WITH PCNA</scope>
    <scope>SUBCELLULAR LOCATION</scope>
    <scope>INTERACTION WITH PCNA</scope>
    <scope>FUNCTION</scope>
    <scope>MOTIF</scope>
    <scope>MUTAGENESIS OF GLN-787; CYS-793 AND PHE-795</scope>
</reference>
<accession>Q5T890</accession>
<accession>A0A590UJ07</accession>
<accession>A4D997</accession>
<accession>B2RTP8</accession>
<accession>Q49AM9</accession>
<accession>Q5T892</accession>
<accession>Q8N663</accession>
<accession>Q8N9D0</accession>
<accession>Q9NPM7</accession>
<sequence length="1550" mass="176051">MDPSAPQPRAETSGKDIWHPGERCLAPSPDNGKLCEASIKSITVDENGKSFAVVLYADFQERKIPLKQLQEVKFVKDCPRNLIFDDEDLEKPYFPNRKFPSSSVAFKLSDNGDSIPYTINRYLRDYQREGTRFLYGHYIHGGGCILGDDMGLGKTVQVISFLAAVLHKKGTREDIENNMPEFLLRSMKKEPLSSTAKKMFLIVAPLSVLYNWKDELDTWGYFRVTVLHGNRKDNELIRVKQRKCEIALTTYETLRLCLDELNSLEWSAVIVDEAHRIKNPKARVTEVMKALKCNVRIGLTGTILQNNMKELWCVMDWAVPGLLGSGTYFKKQFSDPVEHGQRHTATKRELATGRKAMQRLAKKMSGWFLRRTKTLIKDQLPKKEDRMVYCSLTDFQKAVYQTVLETEDVTLILQSSEPCTCRSGQKRRNCCYKTNSHGETVKTLYLSYLTVLQKVANHVALLQAASTSKQQETLIKRICDQVFSRFPDFVQKSKDAAFETLSDPKYSGKMKVLQQLLNHCRKNRDKVLLFSFSTKLLDVLQQYCMASGLDYRRLDGSTKSEERLKIVKEFNSTQDVNICLVSTMAGGLGLNFVGANVVVLFDPTWNPANDLQAIDRAYRIGQCRDVKVLRLISLGTVEEIMYLRQIYKQQLHCVVVGSENAKRYFEAVQGSKEHQGELFGIHNLFKFRSQGSCLTKDILEREGQVEAGIMTATTWLKEGPPAHKLEMPRQPDCQECRGTEQAAEPLAKEACDLCSDFSDEEPVGATGIKTAKNKAPDSSKASSSPGQLTLLQCGFSKLLETKCKAVEDSDGNTASDDESSDEQPTCLSTEAKDAGCEKNQDSLGTSKHQKLDNILNPKEKHIFYKSEKILEQNISSKSDEKKIKNTDKHCILQNVTESEDSDVICPTQYTTERFPDNSIRFKPPLEGSEDSETEHTVKTRNNDNSRNTDDKRNGIISKKLSPENTTLKSILKRKGTSDISDESDDIEISSKSRVRKRASSLRFKRIKETKKELHNSPKTMNKTNQVYAANEDHNSQFIDDYSSSDESLSVSHFSFSKQSHRPRTIRDRTSFSSKLPSHNKKNSTFIPRKPMKCSNEKVVNQEQSYESMDKFLDGVQEVAYIHSNQNVIGSSKAENHMSRWAAHDVFELKQFSQLPANIAVCSSKTYKEKVDADTLPHTKKGQQPSEGSISLPLYISNPVNQKKKKVYHTNQTTFIIGETPKGIRRKQFEEMASYFNSSSVNEFAKHITNATSEERQKMLRDFYASQYPEVKEFFVDSVSQFNNSSFEKGEQRTRKKSDKRESLIKPRLSDSETLSFKDSTNKISQVCSLKTYKRKSVKFQNHISYREEVFFNDAETKKSPVSSTQEIDSGKNSQASEDTVTSRSLNSESETRERRLENTMKDQQDLTRTGISRKEPLLKLENKKIENPVLENTSVISLLGDTSILDDLFKSHGNSPTQLPKKVLSGPMEKAKQRPKDFWDILNEQNDESLSKLTDLAVIETLCEKAPLAAPFKRREEPATSLWKSNEKFLWKKFSPSDTDENATNTQSTT</sequence>
<evidence type="ECO:0000250" key="1">
    <source>
        <dbReference type="UniProtKB" id="Q9JIM3"/>
    </source>
</evidence>
<evidence type="ECO:0000255" key="2">
    <source>
        <dbReference type="PROSITE-ProRule" id="PRU00541"/>
    </source>
</evidence>
<evidence type="ECO:0000255" key="3">
    <source>
        <dbReference type="PROSITE-ProRule" id="PRU00542"/>
    </source>
</evidence>
<evidence type="ECO:0000256" key="4">
    <source>
        <dbReference type="SAM" id="MobiDB-lite"/>
    </source>
</evidence>
<evidence type="ECO:0000269" key="5">
    <source>
    </source>
</evidence>
<evidence type="ECO:0000269" key="6">
    <source>
    </source>
</evidence>
<evidence type="ECO:0000269" key="7">
    <source>
    </source>
</evidence>
<evidence type="ECO:0000269" key="8">
    <source>
    </source>
</evidence>
<evidence type="ECO:0000303" key="9">
    <source>
    </source>
</evidence>
<evidence type="ECO:0000303" key="10">
    <source>
    </source>
</evidence>
<evidence type="ECO:0000303" key="11">
    <source ref="4"/>
</evidence>
<evidence type="ECO:0000305" key="12"/>
<evidence type="ECO:0000312" key="13">
    <source>
        <dbReference type="HGNC" id="HGNC:26922"/>
    </source>
</evidence>
<evidence type="ECO:0007744" key="14">
    <source>
        <dbReference type="PDB" id="8COB"/>
    </source>
</evidence>
<evidence type="ECO:0007744" key="15">
    <source>
    </source>
</evidence>
<evidence type="ECO:0007829" key="16">
    <source>
        <dbReference type="PDB" id="6HQ9"/>
    </source>
</evidence>
<evidence type="ECO:0007829" key="17">
    <source>
        <dbReference type="PDB" id="8COB"/>
    </source>
</evidence>
<gene>
    <name evidence="13" type="primary">ERCC6L2</name>
    <name type="synonym">C9orf102</name>
    <name type="synonym">RAD26L</name>
</gene>
<feature type="chain" id="PRO_0000326086" description="DNA excision repair protein ERCC-6-like 2">
    <location>
        <begin position="1"/>
        <end position="1550"/>
    </location>
</feature>
<feature type="domain" description="Helicase ATP-binding" evidence="2">
    <location>
        <begin position="135"/>
        <end position="321"/>
    </location>
</feature>
<feature type="domain" description="Helicase C-terminal" evidence="3">
    <location>
        <begin position="512"/>
        <end position="662"/>
    </location>
</feature>
<feature type="region of interest" description="Disordered" evidence="4">
    <location>
        <begin position="1"/>
        <end position="23"/>
    </location>
</feature>
<feature type="region of interest" description="Disordered" evidence="4">
    <location>
        <begin position="808"/>
        <end position="848"/>
    </location>
</feature>
<feature type="region of interest" description="Disordered" evidence="4">
    <location>
        <begin position="914"/>
        <end position="1002"/>
    </location>
</feature>
<feature type="region of interest" description="Disordered" evidence="4">
    <location>
        <begin position="1354"/>
        <end position="1410"/>
    </location>
</feature>
<feature type="short sequence motif" description="DEAH box">
    <location>
        <begin position="272"/>
        <end position="275"/>
    </location>
</feature>
<feature type="short sequence motif" description="Atypical PIP-box" evidence="8">
    <location>
        <begin position="785"/>
        <end position="796"/>
    </location>
</feature>
<feature type="compositionally biased region" description="Basic and acidic residues" evidence="4">
    <location>
        <begin position="12"/>
        <end position="22"/>
    </location>
</feature>
<feature type="compositionally biased region" description="Basic and acidic residues" evidence="4">
    <location>
        <begin position="830"/>
        <end position="840"/>
    </location>
</feature>
<feature type="compositionally biased region" description="Basic and acidic residues" evidence="4">
    <location>
        <begin position="933"/>
        <end position="953"/>
    </location>
</feature>
<feature type="compositionally biased region" description="Basic residues" evidence="4">
    <location>
        <begin position="992"/>
        <end position="1002"/>
    </location>
</feature>
<feature type="compositionally biased region" description="Polar residues" evidence="4">
    <location>
        <begin position="1359"/>
        <end position="1388"/>
    </location>
</feature>
<feature type="compositionally biased region" description="Basic and acidic residues" evidence="4">
    <location>
        <begin position="1389"/>
        <end position="1405"/>
    </location>
</feature>
<feature type="binding site" evidence="2">
    <location>
        <begin position="148"/>
        <end position="155"/>
    </location>
    <ligand>
        <name>ATP</name>
        <dbReference type="ChEBI" id="CHEBI:30616"/>
    </ligand>
</feature>
<feature type="modified residue" description="Phosphoserine" evidence="1">
    <location>
        <position position="980"/>
    </location>
</feature>
<feature type="modified residue" description="Phosphoserine" evidence="1">
    <location>
        <position position="983"/>
    </location>
</feature>
<feature type="modified residue" description="Phosphoserine" evidence="15">
    <location>
        <position position="1373"/>
    </location>
</feature>
<feature type="modified residue" description="Phosphoserine" evidence="15">
    <location>
        <position position="1376"/>
    </location>
</feature>
<feature type="splice variant" id="VSP_054668" description="In isoform 2." evidence="9 11">
    <original>R</original>
    <variation>V</variation>
    <location>
        <position position="701"/>
    </location>
</feature>
<feature type="splice variant" id="VSP_054669" description="In isoform 2." evidence="9 11">
    <location>
        <begin position="702"/>
        <end position="1550"/>
    </location>
</feature>
<feature type="sequence variant" id="VAR_039987" description="In dbSNP:rs2274654.">
    <original>V</original>
    <variation>A</variation>
    <location>
        <position position="581"/>
    </location>
</feature>
<feature type="mutagenesis site" description="Affects centromeric localization. Affects localization at sites of DNA replication." evidence="8">
    <original>Q</original>
    <variation>A</variation>
    <location>
        <position position="787"/>
    </location>
</feature>
<feature type="mutagenesis site" description="Affects centromeric localization. Affects localization at sites of DNA replication." evidence="8">
    <original>C</original>
    <variation>A</variation>
    <location>
        <position position="793"/>
    </location>
</feature>
<feature type="mutagenesis site" description="Affects centromeric localization. Affects localization at sites of DNA replication." evidence="8">
    <original>F</original>
    <variation>A</variation>
    <location>
        <position position="795"/>
    </location>
</feature>
<feature type="sequence conflict" description="In Ref. 5; BAC04478." evidence="12" ref="5">
    <original>DENAT</original>
    <variation>A</variation>
    <location>
        <begin position="1540"/>
        <end position="1544"/>
    </location>
</feature>
<feature type="strand" evidence="16">
    <location>
        <begin position="23"/>
        <end position="27"/>
    </location>
</feature>
<feature type="turn" evidence="16">
    <location>
        <begin position="29"/>
        <end position="31"/>
    </location>
</feature>
<feature type="strand" evidence="16">
    <location>
        <begin position="32"/>
        <end position="45"/>
    </location>
</feature>
<feature type="strand" evidence="16">
    <location>
        <begin position="50"/>
        <end position="55"/>
    </location>
</feature>
<feature type="strand" evidence="16">
    <location>
        <begin position="61"/>
        <end position="65"/>
    </location>
</feature>
<feature type="helix" evidence="16">
    <location>
        <begin position="66"/>
        <end position="68"/>
    </location>
</feature>
<feature type="helix" evidence="17">
    <location>
        <begin position="790"/>
        <end position="792"/>
    </location>
</feature>
<proteinExistence type="evidence at protein level"/>
<keyword id="KW-0002">3D-structure</keyword>
<keyword id="KW-0025">Alternative splicing</keyword>
<keyword id="KW-0067">ATP-binding</keyword>
<keyword id="KW-0137">Centromere</keyword>
<keyword id="KW-0158">Chromosome</keyword>
<keyword id="KW-0963">Cytoplasm</keyword>
<keyword id="KW-0206">Cytoskeleton</keyword>
<keyword id="KW-0227">DNA damage</keyword>
<keyword id="KW-0234">DNA repair</keyword>
<keyword id="KW-0238">DNA-binding</keyword>
<keyword id="KW-0347">Helicase</keyword>
<keyword id="KW-0378">Hydrolase</keyword>
<keyword id="KW-0496">Mitochondrion</keyword>
<keyword id="KW-0547">Nucleotide-binding</keyword>
<keyword id="KW-0539">Nucleus</keyword>
<keyword id="KW-0597">Phosphoprotein</keyword>
<keyword id="KW-1267">Proteomics identification</keyword>
<keyword id="KW-1185">Reference proteome</keyword>
<name>ER6L2_HUMAN</name>
<organism>
    <name type="scientific">Homo sapiens</name>
    <name type="common">Human</name>
    <dbReference type="NCBI Taxonomy" id="9606"/>
    <lineage>
        <taxon>Eukaryota</taxon>
        <taxon>Metazoa</taxon>
        <taxon>Chordata</taxon>
        <taxon>Craniata</taxon>
        <taxon>Vertebrata</taxon>
        <taxon>Euteleostomi</taxon>
        <taxon>Mammalia</taxon>
        <taxon>Eutheria</taxon>
        <taxon>Euarchontoglires</taxon>
        <taxon>Primates</taxon>
        <taxon>Haplorrhini</taxon>
        <taxon>Catarrhini</taxon>
        <taxon>Hominidae</taxon>
        <taxon>Homo</taxon>
    </lineage>
</organism>